<evidence type="ECO:0000250" key="1"/>
<evidence type="ECO:0000255" key="2"/>
<evidence type="ECO:0000305" key="3"/>
<keyword id="KW-1003">Cell membrane</keyword>
<keyword id="KW-0472">Membrane</keyword>
<keyword id="KW-0812">Transmembrane</keyword>
<keyword id="KW-1133">Transmembrane helix</keyword>
<sequence length="380" mass="43043">MDNFIVTLLFMAIIGAAIGGVTNHLAIKMLFRPHNAIYIKNWRVPFTPGLIPKRRDELAKQLGLTVVNYLLTPETFRKKFFSKDIQEKVEQFVQTKVEETIFTNDKTIQDWLNIAGFSHMPATIEQKVEAIVEGQFASVKNTLSTKSIRTLLSSDMQDTLDAKIPVAVSHILEKGEDYFLSPEGEMTIKAMIDDFLSSKGSFGGMINMFLGDSSSLVGKVQRELVKFLQAPGTSTLLTKIFTQEWEKLKDRPAMDFLQDMQFDPILSKLQMYVKEQLAVAERLNQPISYYWPEGNEWMKNSVIPQAIDKAFVKAEEKLEDVLKRLNLQEVVREQVDSFPVEKLEELVLGISKREFKMITVLGAVLGGLIGIVQGLIVNFI</sequence>
<proteinExistence type="inferred from homology"/>
<feature type="chain" id="PRO_0000388301" description="UPF0754 membrane protein Bsph_0374">
    <location>
        <begin position="1"/>
        <end position="380"/>
    </location>
</feature>
<feature type="transmembrane region" description="Helical" evidence="2">
    <location>
        <begin position="1"/>
        <end position="21"/>
    </location>
</feature>
<feature type="transmembrane region" description="Helical" evidence="2">
    <location>
        <begin position="357"/>
        <end position="377"/>
    </location>
</feature>
<accession>B1HVI2</accession>
<organism>
    <name type="scientific">Lysinibacillus sphaericus (strain C3-41)</name>
    <dbReference type="NCBI Taxonomy" id="444177"/>
    <lineage>
        <taxon>Bacteria</taxon>
        <taxon>Bacillati</taxon>
        <taxon>Bacillota</taxon>
        <taxon>Bacilli</taxon>
        <taxon>Bacillales</taxon>
        <taxon>Bacillaceae</taxon>
        <taxon>Lysinibacillus</taxon>
    </lineage>
</organism>
<reference key="1">
    <citation type="journal article" date="2008" name="J. Bacteriol.">
        <title>Complete genome sequence of the mosquitocidal bacterium Bacillus sphaericus C3-41 and comparison with those of closely related Bacillus species.</title>
        <authorList>
            <person name="Hu X."/>
            <person name="Fan W."/>
            <person name="Han B."/>
            <person name="Liu H."/>
            <person name="Zheng D."/>
            <person name="Li Q."/>
            <person name="Dong W."/>
            <person name="Yan J."/>
            <person name="Gao M."/>
            <person name="Berry C."/>
            <person name="Yuan Z."/>
        </authorList>
    </citation>
    <scope>NUCLEOTIDE SEQUENCE [LARGE SCALE GENOMIC DNA]</scope>
    <source>
        <strain>C3-41</strain>
    </source>
</reference>
<gene>
    <name type="ordered locus">Bsph_0374</name>
</gene>
<protein>
    <recommendedName>
        <fullName>UPF0754 membrane protein Bsph_0374</fullName>
    </recommendedName>
</protein>
<dbReference type="EMBL" id="CP000817">
    <property type="protein sequence ID" value="ACA38001.1"/>
    <property type="molecule type" value="Genomic_DNA"/>
</dbReference>
<dbReference type="RefSeq" id="WP_012292160.1">
    <property type="nucleotide sequence ID" value="NC_010382.1"/>
</dbReference>
<dbReference type="EnsemblBacteria" id="ACA38001">
    <property type="protein sequence ID" value="ACA38001"/>
    <property type="gene ID" value="Bsph_0374"/>
</dbReference>
<dbReference type="KEGG" id="lsp:Bsph_0374"/>
<dbReference type="HOGENOM" id="CLU_042384_0_0_9"/>
<dbReference type="Proteomes" id="UP000002164">
    <property type="component" value="Chromosome"/>
</dbReference>
<dbReference type="GO" id="GO:0005886">
    <property type="term" value="C:plasma membrane"/>
    <property type="evidence" value="ECO:0007669"/>
    <property type="project" value="UniProtKB-SubCell"/>
</dbReference>
<dbReference type="InterPro" id="IPR007383">
    <property type="entry name" value="DUF445"/>
</dbReference>
<dbReference type="InterPro" id="IPR016991">
    <property type="entry name" value="UCP032178"/>
</dbReference>
<dbReference type="PANTHER" id="PTHR35791">
    <property type="entry name" value="UPF0754 MEMBRANE PROTEIN YHEB"/>
    <property type="match status" value="1"/>
</dbReference>
<dbReference type="PANTHER" id="PTHR35791:SF1">
    <property type="entry name" value="UPF0754 MEMBRANE PROTEIN YHEB"/>
    <property type="match status" value="1"/>
</dbReference>
<dbReference type="Pfam" id="PF04286">
    <property type="entry name" value="DUF445"/>
    <property type="match status" value="1"/>
</dbReference>
<dbReference type="PIRSF" id="PIRSF032178">
    <property type="entry name" value="UCP032178"/>
    <property type="match status" value="1"/>
</dbReference>
<comment type="subcellular location">
    <subcellularLocation>
        <location evidence="1">Cell membrane</location>
        <topology evidence="1">Multi-pass membrane protein</topology>
    </subcellularLocation>
</comment>
<comment type="similarity">
    <text evidence="3">Belongs to the UPF0754 family.</text>
</comment>
<name>Y374_LYSSC</name>